<keyword id="KW-1064">Adaptive immunity</keyword>
<keyword id="KW-1003">Cell membrane</keyword>
<keyword id="KW-1015">Disulfide bond</keyword>
<keyword id="KW-0325">Glycoprotein</keyword>
<keyword id="KW-0391">Immunity</keyword>
<keyword id="KW-0393">Immunoglobulin domain</keyword>
<keyword id="KW-0472">Membrane</keyword>
<keyword id="KW-1267">Proteomics identification</keyword>
<keyword id="KW-0675">Receptor</keyword>
<keyword id="KW-1185">Reference proteome</keyword>
<keyword id="KW-0732">Signal</keyword>
<keyword id="KW-1279">T cell receptor</keyword>
<dbReference type="EMBL" id="AC243980">
    <property type="status" value="NOT_ANNOTATED_CDS"/>
    <property type="molecule type" value="Genomic_DNA"/>
</dbReference>
<dbReference type="SMR" id="A0A0A6YYC5"/>
<dbReference type="FunCoup" id="A0A0A6YYC5">
    <property type="interactions" value="339"/>
</dbReference>
<dbReference type="IMGT_GENE-DB" id="TRAV14DV4"/>
<dbReference type="GlyCosmos" id="A0A0A6YYC5">
    <property type="glycosylation" value="1 site, No reported glycans"/>
</dbReference>
<dbReference type="GlyGen" id="A0A0A6YYC5">
    <property type="glycosylation" value="1 site"/>
</dbReference>
<dbReference type="BioMuta" id="TRAV14DV4"/>
<dbReference type="Ensembl" id="ENST00000390440.2">
    <property type="protein sequence ID" value="ENSP00000446015.1"/>
    <property type="gene ID" value="ENSG00000211792.2"/>
</dbReference>
<dbReference type="AGR" id="HGNC:12110"/>
<dbReference type="GeneCards" id="TRAV14DV4"/>
<dbReference type="HGNC" id="HGNC:12110">
    <property type="gene designation" value="TRAV14DV4"/>
</dbReference>
<dbReference type="HPA" id="ENSG00000211792">
    <property type="expression patterns" value="Tissue enriched (lymphoid)"/>
</dbReference>
<dbReference type="neXtProt" id="NX_A0A0A6YYC5"/>
<dbReference type="VEuPathDB" id="HostDB:ENSG00000211792"/>
<dbReference type="GeneTree" id="ENSGT00940000163052"/>
<dbReference type="HOGENOM" id="CLU_077975_8_1_1"/>
<dbReference type="InParanoid" id="A0A0A6YYC5"/>
<dbReference type="OMA" id="MYFCAMR"/>
<dbReference type="OrthoDB" id="9623171at2759"/>
<dbReference type="PAN-GO" id="A0A0A6YYC5">
    <property type="GO annotations" value="3 GO annotations based on evolutionary models"/>
</dbReference>
<dbReference type="ChiTaRS" id="TRAV14DV4">
    <property type="organism name" value="human"/>
</dbReference>
<dbReference type="Pharos" id="A0A0A6YYC5">
    <property type="development level" value="Tdark"/>
</dbReference>
<dbReference type="PRO" id="PR:A0A0A6YYC5"/>
<dbReference type="Proteomes" id="UP000005640">
    <property type="component" value="Chromosome 14"/>
</dbReference>
<dbReference type="RNAct" id="A0A0A6YYC5">
    <property type="molecule type" value="protein"/>
</dbReference>
<dbReference type="Bgee" id="ENSG00000211792">
    <property type="expression patterns" value="Expressed in granulocyte and 76 other cell types or tissues"/>
</dbReference>
<dbReference type="GO" id="GO:0019814">
    <property type="term" value="C:immunoglobulin complex"/>
    <property type="evidence" value="ECO:0000318"/>
    <property type="project" value="GO_Central"/>
</dbReference>
<dbReference type="GO" id="GO:0042101">
    <property type="term" value="C:T cell receptor complex"/>
    <property type="evidence" value="ECO:0007669"/>
    <property type="project" value="UniProtKB-KW"/>
</dbReference>
<dbReference type="GO" id="GO:0002250">
    <property type="term" value="P:adaptive immune response"/>
    <property type="evidence" value="ECO:0007669"/>
    <property type="project" value="UniProtKB-KW"/>
</dbReference>
<dbReference type="GO" id="GO:0006955">
    <property type="term" value="P:immune response"/>
    <property type="evidence" value="ECO:0000318"/>
    <property type="project" value="GO_Central"/>
</dbReference>
<dbReference type="FunFam" id="2.60.40.10:FF:000878">
    <property type="entry name" value="T cell receptor alpha variable 38-1"/>
    <property type="match status" value="1"/>
</dbReference>
<dbReference type="Gene3D" id="2.60.40.10">
    <property type="entry name" value="Immunoglobulins"/>
    <property type="match status" value="1"/>
</dbReference>
<dbReference type="InterPro" id="IPR007110">
    <property type="entry name" value="Ig-like_dom"/>
</dbReference>
<dbReference type="InterPro" id="IPR036179">
    <property type="entry name" value="Ig-like_dom_sf"/>
</dbReference>
<dbReference type="InterPro" id="IPR013783">
    <property type="entry name" value="Ig-like_fold"/>
</dbReference>
<dbReference type="InterPro" id="IPR013106">
    <property type="entry name" value="Ig_V-set"/>
</dbReference>
<dbReference type="InterPro" id="IPR051287">
    <property type="entry name" value="TCR_variable_region"/>
</dbReference>
<dbReference type="PANTHER" id="PTHR19367:SF45">
    <property type="entry name" value="IG-LIKE DOMAIN-CONTAINING PROTEIN"/>
    <property type="match status" value="1"/>
</dbReference>
<dbReference type="PANTHER" id="PTHR19367">
    <property type="entry name" value="T-CELL RECEPTOR ALPHA CHAIN V REGION"/>
    <property type="match status" value="1"/>
</dbReference>
<dbReference type="Pfam" id="PF07686">
    <property type="entry name" value="V-set"/>
    <property type="match status" value="1"/>
</dbReference>
<dbReference type="SMART" id="SM00406">
    <property type="entry name" value="IGv"/>
    <property type="match status" value="1"/>
</dbReference>
<dbReference type="SUPFAM" id="SSF48726">
    <property type="entry name" value="Immunoglobulin"/>
    <property type="match status" value="1"/>
</dbReference>
<dbReference type="PROSITE" id="PS50835">
    <property type="entry name" value="IG_LIKE"/>
    <property type="match status" value="1"/>
</dbReference>
<sequence>MSLSSLLKVVTASLWLGPGIAQKITQTQPGMFVQEKEAVTLDCTYDTSDPSYGLFWYKQPSSGEMIFLIYQGSYDQQNATEGRYSLNFQKARKSANLVISASQLGDSAMYFCAMRE</sequence>
<comment type="function">
    <text evidence="3 5 6 7">V region of the variable domain of T cell receptor (TR) alpha chain that participates in the antigen recognition (PubMed:24600447). Alpha-beta T cell receptors are antigen specific receptors which are essential to the immune response and are present on the cell surface of T lymphocytes. Recognize peptide-major histocompatibility (MH) (pMH) complexes that are displayed by antigen presenting cells (APC), a prerequisite for efficient T cell adaptive immunity against pathogens (PubMed:25493333). Binding of alpha-beta TR to pMH complex initiates TR-CD3 clustering on the cell surface and intracellular activation of LCK that phosphorylates the ITAM motifs of CD3G, CD3D, CD3E and CD247 enabling the recruitment of ZAP70. In turn ZAP70 phosphorylates LAT, which recruits numerous signaling molecules to form the LAT signalosome. The LAT signalosome propagates signal branching to three major signaling pathways, the calcium, the mitogen-activated protein kinase (MAPK) kinase and the nuclear factor NF-kappa-B (NF-kB) pathways, leading to the mobilization of transcription factors that are critical for gene expression and essential for T cell growth and differentiation (PubMed:23524462). The T cell repertoire is generated in the thymus, by V-(D)-J rearrangement. This repertoire is then shaped by intrathymic selection events to generate a peripheral T cell pool of self-MH restricted, non-autoaggressive T cells. Post-thymic interaction of alpha-beta TR with the pMH complexes shapes TR structural and functional avidity (PubMed:15040585).</text>
</comment>
<comment type="subunit">
    <text evidence="4">Alpha-beta TR is a heterodimer composed of an alpha and beta chain; disulfide-linked. The alpha-beta TR is associated with the transmembrane signaling CD3 coreceptor proteins to form the TR-CD3 (TcR or TCR). The assembly of alpha-beta TR heterodimers with CD3 occurs in the endoplasmic reticulum where a single alpha-beta TR heterodimer associates with one CD3D-CD3E heterodimer, one CD3G-CD3E heterodimer and one CD247 homodimer forming a stable octameric structure. CD3D-CD3E and CD3G-CD3E heterodimers preferentially associate with TR alpha and TR beta chains, respectively. The association of the CD247 homodimer is the last step of TcR assembly in the endoplasmic reticulum and is required for transport to the cell surface.</text>
</comment>
<comment type="subcellular location">
    <subcellularLocation>
        <location evidence="4">Cell membrane</location>
    </subcellularLocation>
</comment>
<comment type="polymorphism">
    <text evidence="9">There are several alleles. The sequence shown is that of IMGT allele TRAV14/DV4*01.</text>
</comment>
<gene>
    <name evidence="8" type="primary">TRAV14DV4</name>
</gene>
<proteinExistence type="evidence at protein level"/>
<name>TVA14_HUMAN</name>
<evidence type="ECO:0000255" key="1"/>
<evidence type="ECO:0000255" key="2">
    <source>
        <dbReference type="PROSITE-ProRule" id="PRU00114"/>
    </source>
</evidence>
<evidence type="ECO:0000303" key="3">
    <source>
    </source>
</evidence>
<evidence type="ECO:0000303" key="4">
    <source>
    </source>
</evidence>
<evidence type="ECO:0000303" key="5">
    <source>
    </source>
</evidence>
<evidence type="ECO:0000303" key="6">
    <source>
    </source>
</evidence>
<evidence type="ECO:0000303" key="7">
    <source>
    </source>
</evidence>
<evidence type="ECO:0000303" key="8">
    <source ref="2"/>
</evidence>
<evidence type="ECO:0000305" key="9"/>
<accession>A0A0A6YYC5</accession>
<protein>
    <recommendedName>
        <fullName evidence="8">T cell receptor alpha variable 14/delta variable 4</fullName>
    </recommendedName>
</protein>
<feature type="signal peptide" evidence="1">
    <location>
        <begin position="1"/>
        <end position="21"/>
    </location>
</feature>
<feature type="chain" id="PRO_5008203084" description="T cell receptor alpha variable 14/delta variable 4" evidence="1">
    <location>
        <begin position="22"/>
        <end position="116"/>
    </location>
</feature>
<feature type="domain" description="Ig-like" evidence="2">
    <location>
        <begin position="22"/>
        <end position="116" status="greater than"/>
    </location>
</feature>
<feature type="glycosylation site" description="N-linked (GlcNAc...) asparagine" evidence="1">
    <location>
        <position position="78"/>
    </location>
</feature>
<feature type="disulfide bond" evidence="2">
    <location>
        <begin position="43"/>
        <end position="112"/>
    </location>
</feature>
<feature type="non-terminal residue">
    <location>
        <position position="116"/>
    </location>
</feature>
<organism>
    <name type="scientific">Homo sapiens</name>
    <name type="common">Human</name>
    <dbReference type="NCBI Taxonomy" id="9606"/>
    <lineage>
        <taxon>Eukaryota</taxon>
        <taxon>Metazoa</taxon>
        <taxon>Chordata</taxon>
        <taxon>Craniata</taxon>
        <taxon>Vertebrata</taxon>
        <taxon>Euteleostomi</taxon>
        <taxon>Mammalia</taxon>
        <taxon>Eutheria</taxon>
        <taxon>Euarchontoglires</taxon>
        <taxon>Primates</taxon>
        <taxon>Haplorrhini</taxon>
        <taxon>Catarrhini</taxon>
        <taxon>Hominidae</taxon>
        <taxon>Homo</taxon>
    </lineage>
</organism>
<reference key="1">
    <citation type="journal article" date="2003" name="Nature">
        <title>The DNA sequence and analysis of human chromosome 14.</title>
        <authorList>
            <person name="Heilig R."/>
            <person name="Eckenberg R."/>
            <person name="Petit J.-L."/>
            <person name="Fonknechten N."/>
            <person name="Da Silva C."/>
            <person name="Cattolico L."/>
            <person name="Levy M."/>
            <person name="Barbe V."/>
            <person name="De Berardinis V."/>
            <person name="Ureta-Vidal A."/>
            <person name="Pelletier E."/>
            <person name="Vico V."/>
            <person name="Anthouard V."/>
            <person name="Rowen L."/>
            <person name="Madan A."/>
            <person name="Qin S."/>
            <person name="Sun H."/>
            <person name="Du H."/>
            <person name="Pepin K."/>
            <person name="Artiguenave F."/>
            <person name="Robert C."/>
            <person name="Cruaud C."/>
            <person name="Bruels T."/>
            <person name="Jaillon O."/>
            <person name="Friedlander L."/>
            <person name="Samson G."/>
            <person name="Brottier P."/>
            <person name="Cure S."/>
            <person name="Segurens B."/>
            <person name="Aniere F."/>
            <person name="Samain S."/>
            <person name="Crespeau H."/>
            <person name="Abbasi N."/>
            <person name="Aiach N."/>
            <person name="Boscus D."/>
            <person name="Dickhoff R."/>
            <person name="Dors M."/>
            <person name="Dubois I."/>
            <person name="Friedman C."/>
            <person name="Gouyvenoux M."/>
            <person name="James R."/>
            <person name="Madan A."/>
            <person name="Mairey-Estrada B."/>
            <person name="Mangenot S."/>
            <person name="Martins N."/>
            <person name="Menard M."/>
            <person name="Oztas S."/>
            <person name="Ratcliffe A."/>
            <person name="Shaffer T."/>
            <person name="Trask B."/>
            <person name="Vacherie B."/>
            <person name="Bellemere C."/>
            <person name="Belser C."/>
            <person name="Besnard-Gonnet M."/>
            <person name="Bartol-Mavel D."/>
            <person name="Boutard M."/>
            <person name="Briez-Silla S."/>
            <person name="Combette S."/>
            <person name="Dufosse-Laurent V."/>
            <person name="Ferron C."/>
            <person name="Lechaplais C."/>
            <person name="Louesse C."/>
            <person name="Muselet D."/>
            <person name="Magdelenat G."/>
            <person name="Pateau E."/>
            <person name="Petit E."/>
            <person name="Sirvain-Trukniewicz P."/>
            <person name="Trybou A."/>
            <person name="Vega-Czarny N."/>
            <person name="Bataille E."/>
            <person name="Bluet E."/>
            <person name="Bordelais I."/>
            <person name="Dubois M."/>
            <person name="Dumont C."/>
            <person name="Guerin T."/>
            <person name="Haffray S."/>
            <person name="Hammadi R."/>
            <person name="Muanga J."/>
            <person name="Pellouin V."/>
            <person name="Robert D."/>
            <person name="Wunderle E."/>
            <person name="Gauguet G."/>
            <person name="Roy A."/>
            <person name="Sainte-Marthe L."/>
            <person name="Verdier J."/>
            <person name="Verdier-Discala C."/>
            <person name="Hillier L.W."/>
            <person name="Fulton L."/>
            <person name="McPherson J."/>
            <person name="Matsuda F."/>
            <person name="Wilson R."/>
            <person name="Scarpelli C."/>
            <person name="Gyapay G."/>
            <person name="Wincker P."/>
            <person name="Saurin W."/>
            <person name="Quetier F."/>
            <person name="Waterston R."/>
            <person name="Hood L."/>
            <person name="Weissenbach J."/>
        </authorList>
    </citation>
    <scope>NUCLEOTIDE SEQUENCE [LARGE SCALE GENOMIC DNA] (IMGT ALLELE TRAV14/DV4*01)</scope>
</reference>
<reference key="2">
    <citation type="book" date="2001" name="The T Cell Receptor FactsBook.">
        <title>The T Cell Receptor FactsBook.</title>
        <editorList>
            <person name="Lefranc M.P."/>
            <person name="Lefranc G."/>
        </editorList>
        <authorList>
            <person name="Lefranc M.P."/>
            <person name="Lefranc G."/>
        </authorList>
    </citation>
    <scope>NOMENCLATURE</scope>
</reference>
<reference key="3">
    <citation type="journal article" date="2004" name="Nat. Rev. Immunol.">
        <title>The many important facets of T-cell repertoire diversity.</title>
        <authorList>
            <person name="Nikolich-Zugich J."/>
            <person name="Slifka M.K."/>
            <person name="Messaoudi I."/>
        </authorList>
    </citation>
    <scope>REVIEW ON T CELL REPERTOIRE DIVERSITY</scope>
</reference>
<reference key="4">
    <citation type="journal article" date="2010" name="Cold Spring Harb. Perspect. Biol.">
        <title>Structural biology of the T-cell receptor: insights into receptor assembly, ligand recognition, and initiation of signaling.</title>
        <authorList>
            <person name="Wucherpfennig K.W."/>
            <person name="Gagnon E."/>
            <person name="Call M.J."/>
            <person name="Huseby E.S."/>
            <person name="Call M.E."/>
        </authorList>
    </citation>
    <scope>REVIEW ON T CELL RECEPTOR-CD3 COMPLEX ASSEMBLY</scope>
    <scope>SUBCELLULAR LOCATION</scope>
</reference>
<reference key="5">
    <citation type="journal article" date="2013" name="Nat. Rev. Immunol.">
        <title>T cell receptor signalling networks: branched, diversified and bounded.</title>
        <authorList>
            <person name="Brownlie R.J."/>
            <person name="Zamoyska R."/>
        </authorList>
    </citation>
    <scope>REVIEW ON T CELL RECEPTOR SIGNALING</scope>
</reference>
<reference key="6">
    <citation type="journal article" date="2014" name="Front. Immunol.">
        <title>Immunoglobulin and T Cell Receptor Genes: IMGT((R)) and the Birth and Rise of Immunoinformatics.</title>
        <authorList>
            <person name="Lefranc M.P."/>
        </authorList>
    </citation>
    <scope>NOMENCLATURE</scope>
</reference>
<reference key="7">
    <citation type="journal article" date="2015" name="Annu. Rev. Immunol.">
        <title>T cell antigen receptor recognition of antigen-presenting molecules.</title>
        <authorList>
            <person name="Rossjohn J."/>
            <person name="Gras S."/>
            <person name="Miles J.J."/>
            <person name="Turner S.J."/>
            <person name="Godfrey D.I."/>
            <person name="McCluskey J."/>
        </authorList>
    </citation>
    <scope>REVIEW ON FUNCTION</scope>
</reference>